<name>EFP_PARM1</name>
<organism>
    <name type="scientific">Paramagnetospirillum magneticum (strain ATCC 700264 / AMB-1)</name>
    <name type="common">Magnetospirillum magneticum</name>
    <dbReference type="NCBI Taxonomy" id="342108"/>
    <lineage>
        <taxon>Bacteria</taxon>
        <taxon>Pseudomonadati</taxon>
        <taxon>Pseudomonadota</taxon>
        <taxon>Alphaproteobacteria</taxon>
        <taxon>Rhodospirillales</taxon>
        <taxon>Magnetospirillaceae</taxon>
        <taxon>Paramagnetospirillum</taxon>
    </lineage>
</organism>
<sequence length="188" mass="20949">MKINANLIRPGNILEHNGRQYAVLKTQIVQPGKGGAFITVEMRDIRTGNKTNERWRTADTIEKCNVEAKECTFLFKDDSNMTFMDSESFEQFTMPNDTLGDTIGFLQDGMVVEVDFVEGSPVSITLPEKVVMKVVEADPVVKGQTASSSYKPAKLENGMKILVPPFLEEGEVIIVNTTDCSYVERFKG</sequence>
<proteinExistence type="inferred from homology"/>
<gene>
    <name evidence="1" type="primary">efp</name>
    <name type="ordered locus">amb1285</name>
</gene>
<evidence type="ECO:0000255" key="1">
    <source>
        <dbReference type="HAMAP-Rule" id="MF_00141"/>
    </source>
</evidence>
<protein>
    <recommendedName>
        <fullName evidence="1">Elongation factor P</fullName>
        <shortName evidence="1">EF-P</shortName>
    </recommendedName>
</protein>
<dbReference type="EMBL" id="AP007255">
    <property type="protein sequence ID" value="BAE50089.1"/>
    <property type="molecule type" value="Genomic_DNA"/>
</dbReference>
<dbReference type="RefSeq" id="WP_009868540.1">
    <property type="nucleotide sequence ID" value="NC_007626.1"/>
</dbReference>
<dbReference type="SMR" id="Q2W7T6"/>
<dbReference type="STRING" id="342108.amb1285"/>
<dbReference type="KEGG" id="mag:amb1285"/>
<dbReference type="HOGENOM" id="CLU_074944_1_1_5"/>
<dbReference type="OrthoDB" id="9801844at2"/>
<dbReference type="UniPathway" id="UPA00345"/>
<dbReference type="Proteomes" id="UP000007058">
    <property type="component" value="Chromosome"/>
</dbReference>
<dbReference type="GO" id="GO:0005737">
    <property type="term" value="C:cytoplasm"/>
    <property type="evidence" value="ECO:0007669"/>
    <property type="project" value="UniProtKB-SubCell"/>
</dbReference>
<dbReference type="GO" id="GO:0003746">
    <property type="term" value="F:translation elongation factor activity"/>
    <property type="evidence" value="ECO:0007669"/>
    <property type="project" value="UniProtKB-UniRule"/>
</dbReference>
<dbReference type="GO" id="GO:0043043">
    <property type="term" value="P:peptide biosynthetic process"/>
    <property type="evidence" value="ECO:0007669"/>
    <property type="project" value="InterPro"/>
</dbReference>
<dbReference type="CDD" id="cd04470">
    <property type="entry name" value="S1_EF-P_repeat_1"/>
    <property type="match status" value="1"/>
</dbReference>
<dbReference type="CDD" id="cd05794">
    <property type="entry name" value="S1_EF-P_repeat_2"/>
    <property type="match status" value="1"/>
</dbReference>
<dbReference type="FunFam" id="2.30.30.30:FF:000003">
    <property type="entry name" value="Elongation factor P"/>
    <property type="match status" value="1"/>
</dbReference>
<dbReference type="FunFam" id="2.40.50.140:FF:000004">
    <property type="entry name" value="Elongation factor P"/>
    <property type="match status" value="1"/>
</dbReference>
<dbReference type="FunFam" id="2.40.50.140:FF:000009">
    <property type="entry name" value="Elongation factor P"/>
    <property type="match status" value="1"/>
</dbReference>
<dbReference type="Gene3D" id="2.30.30.30">
    <property type="match status" value="1"/>
</dbReference>
<dbReference type="Gene3D" id="2.40.50.140">
    <property type="entry name" value="Nucleic acid-binding proteins"/>
    <property type="match status" value="2"/>
</dbReference>
<dbReference type="HAMAP" id="MF_00141">
    <property type="entry name" value="EF_P"/>
    <property type="match status" value="1"/>
</dbReference>
<dbReference type="InterPro" id="IPR015365">
    <property type="entry name" value="Elong-fact-P_C"/>
</dbReference>
<dbReference type="InterPro" id="IPR012340">
    <property type="entry name" value="NA-bd_OB-fold"/>
</dbReference>
<dbReference type="InterPro" id="IPR014722">
    <property type="entry name" value="Rib_uL2_dom2"/>
</dbReference>
<dbReference type="InterPro" id="IPR020599">
    <property type="entry name" value="Transl_elong_fac_P/YeiP"/>
</dbReference>
<dbReference type="InterPro" id="IPR013185">
    <property type="entry name" value="Transl_elong_KOW-like"/>
</dbReference>
<dbReference type="InterPro" id="IPR001059">
    <property type="entry name" value="Transl_elong_P/YeiP_cen"/>
</dbReference>
<dbReference type="InterPro" id="IPR013852">
    <property type="entry name" value="Transl_elong_P/YeiP_CS"/>
</dbReference>
<dbReference type="InterPro" id="IPR011768">
    <property type="entry name" value="Transl_elongation_fac_P"/>
</dbReference>
<dbReference type="InterPro" id="IPR008991">
    <property type="entry name" value="Translation_prot_SH3-like_sf"/>
</dbReference>
<dbReference type="NCBIfam" id="TIGR00038">
    <property type="entry name" value="efp"/>
    <property type="match status" value="1"/>
</dbReference>
<dbReference type="NCBIfam" id="NF001810">
    <property type="entry name" value="PRK00529.1"/>
    <property type="match status" value="1"/>
</dbReference>
<dbReference type="PANTHER" id="PTHR30053">
    <property type="entry name" value="ELONGATION FACTOR P"/>
    <property type="match status" value="1"/>
</dbReference>
<dbReference type="PANTHER" id="PTHR30053:SF14">
    <property type="entry name" value="TRANSLATION ELONGATION FACTOR KOW-LIKE DOMAIN-CONTAINING PROTEIN"/>
    <property type="match status" value="1"/>
</dbReference>
<dbReference type="Pfam" id="PF01132">
    <property type="entry name" value="EFP"/>
    <property type="match status" value="1"/>
</dbReference>
<dbReference type="Pfam" id="PF08207">
    <property type="entry name" value="EFP_N"/>
    <property type="match status" value="1"/>
</dbReference>
<dbReference type="Pfam" id="PF09285">
    <property type="entry name" value="Elong-fact-P_C"/>
    <property type="match status" value="1"/>
</dbReference>
<dbReference type="PIRSF" id="PIRSF005901">
    <property type="entry name" value="EF-P"/>
    <property type="match status" value="1"/>
</dbReference>
<dbReference type="SMART" id="SM01185">
    <property type="entry name" value="EFP"/>
    <property type="match status" value="1"/>
</dbReference>
<dbReference type="SMART" id="SM00841">
    <property type="entry name" value="Elong-fact-P_C"/>
    <property type="match status" value="1"/>
</dbReference>
<dbReference type="SUPFAM" id="SSF50249">
    <property type="entry name" value="Nucleic acid-binding proteins"/>
    <property type="match status" value="2"/>
</dbReference>
<dbReference type="SUPFAM" id="SSF50104">
    <property type="entry name" value="Translation proteins SH3-like domain"/>
    <property type="match status" value="1"/>
</dbReference>
<dbReference type="PROSITE" id="PS01275">
    <property type="entry name" value="EFP"/>
    <property type="match status" value="1"/>
</dbReference>
<keyword id="KW-0963">Cytoplasm</keyword>
<keyword id="KW-0251">Elongation factor</keyword>
<keyword id="KW-0648">Protein biosynthesis</keyword>
<reference key="1">
    <citation type="journal article" date="2005" name="DNA Res.">
        <title>Complete genome sequence of the facultative anaerobic magnetotactic bacterium Magnetospirillum sp. strain AMB-1.</title>
        <authorList>
            <person name="Matsunaga T."/>
            <person name="Okamura Y."/>
            <person name="Fukuda Y."/>
            <person name="Wahyudi A.T."/>
            <person name="Murase Y."/>
            <person name="Takeyama H."/>
        </authorList>
    </citation>
    <scope>NUCLEOTIDE SEQUENCE [LARGE SCALE GENOMIC DNA]</scope>
    <source>
        <strain>ATCC 700264 / AMB-1</strain>
    </source>
</reference>
<accession>Q2W7T6</accession>
<feature type="chain" id="PRO_1000010773" description="Elongation factor P">
    <location>
        <begin position="1"/>
        <end position="188"/>
    </location>
</feature>
<comment type="function">
    <text evidence="1">Involved in peptide bond synthesis. Stimulates efficient translation and peptide-bond synthesis on native or reconstituted 70S ribosomes in vitro. Probably functions indirectly by altering the affinity of the ribosome for aminoacyl-tRNA, thus increasing their reactivity as acceptors for peptidyl transferase.</text>
</comment>
<comment type="pathway">
    <text evidence="1">Protein biosynthesis; polypeptide chain elongation.</text>
</comment>
<comment type="subcellular location">
    <subcellularLocation>
        <location evidence="1">Cytoplasm</location>
    </subcellularLocation>
</comment>
<comment type="similarity">
    <text evidence="1">Belongs to the elongation factor P family.</text>
</comment>